<gene>
    <name evidence="1" type="primary">rcsB</name>
    <name type="ordered locus">STM2270</name>
</gene>
<dbReference type="EMBL" id="AE006468">
    <property type="protein sequence ID" value="AAL21171.1"/>
    <property type="molecule type" value="Genomic_DNA"/>
</dbReference>
<dbReference type="RefSeq" id="NP_461212.1">
    <property type="nucleotide sequence ID" value="NC_003197.2"/>
</dbReference>
<dbReference type="RefSeq" id="WP_001061919.1">
    <property type="nucleotide sequence ID" value="NC_003197.2"/>
</dbReference>
<dbReference type="PDB" id="5O8Y">
    <property type="method" value="X-ray"/>
    <property type="resolution" value="2.30 A"/>
    <property type="chains" value="A/C/D/F/G/H=1-216"/>
</dbReference>
<dbReference type="PDB" id="5O8Z">
    <property type="method" value="X-ray"/>
    <property type="resolution" value="2.10 A"/>
    <property type="chains" value="A/B=1-216"/>
</dbReference>
<dbReference type="PDB" id="6EO2">
    <property type="method" value="X-ray"/>
    <property type="resolution" value="2.60 A"/>
    <property type="chains" value="A=1-210"/>
</dbReference>
<dbReference type="PDB" id="6EO3">
    <property type="method" value="X-ray"/>
    <property type="resolution" value="2.50 A"/>
    <property type="chains" value="A/B=1-210"/>
</dbReference>
<dbReference type="PDB" id="6ZII">
    <property type="method" value="X-ray"/>
    <property type="resolution" value="2.50 A"/>
    <property type="chains" value="A/B=1-143"/>
</dbReference>
<dbReference type="PDB" id="6ZIL">
    <property type="method" value="X-ray"/>
    <property type="resolution" value="3.12 A"/>
    <property type="chains" value="B=1-143"/>
</dbReference>
<dbReference type="PDB" id="6ZIX">
    <property type="method" value="X-ray"/>
    <property type="resolution" value="3.40 A"/>
    <property type="chains" value="A/B=1-216"/>
</dbReference>
<dbReference type="PDB" id="6ZJ2">
    <property type="method" value="X-ray"/>
    <property type="resolution" value="3.38 A"/>
    <property type="chains" value="A/B/C/D/L/M/N/O=1-216"/>
</dbReference>
<dbReference type="PDBsum" id="5O8Y"/>
<dbReference type="PDBsum" id="5O8Z"/>
<dbReference type="PDBsum" id="6EO2"/>
<dbReference type="PDBsum" id="6EO3"/>
<dbReference type="PDBsum" id="6ZII"/>
<dbReference type="PDBsum" id="6ZIL"/>
<dbReference type="PDBsum" id="6ZIX"/>
<dbReference type="PDBsum" id="6ZJ2"/>
<dbReference type="SMR" id="P58663"/>
<dbReference type="STRING" id="99287.STM2270"/>
<dbReference type="PaxDb" id="99287-STM2270"/>
<dbReference type="GeneID" id="1253792"/>
<dbReference type="KEGG" id="stm:STM2270"/>
<dbReference type="PATRIC" id="fig|99287.12.peg.2403"/>
<dbReference type="HOGENOM" id="CLU_000445_90_1_6"/>
<dbReference type="OMA" id="IEWVNIV"/>
<dbReference type="PhylomeDB" id="P58663"/>
<dbReference type="BioCyc" id="SENT99287:STM2270-MONOMER"/>
<dbReference type="Proteomes" id="UP000001014">
    <property type="component" value="Chromosome"/>
</dbReference>
<dbReference type="GO" id="GO:0003677">
    <property type="term" value="F:DNA binding"/>
    <property type="evidence" value="ECO:0007669"/>
    <property type="project" value="UniProtKB-UniRule"/>
</dbReference>
<dbReference type="GO" id="GO:0000160">
    <property type="term" value="P:phosphorelay signal transduction system"/>
    <property type="evidence" value="ECO:0007669"/>
    <property type="project" value="UniProtKB-UniRule"/>
</dbReference>
<dbReference type="GO" id="GO:0006355">
    <property type="term" value="P:regulation of DNA-templated transcription"/>
    <property type="evidence" value="ECO:0007669"/>
    <property type="project" value="UniProtKB-UniRule"/>
</dbReference>
<dbReference type="CDD" id="cd06170">
    <property type="entry name" value="LuxR_C_like"/>
    <property type="match status" value="1"/>
</dbReference>
<dbReference type="CDD" id="cd17535">
    <property type="entry name" value="REC_NarL-like"/>
    <property type="match status" value="1"/>
</dbReference>
<dbReference type="FunFam" id="1.10.10.10:FF:000072">
    <property type="entry name" value="Transcriptional regulatory protein RcsB"/>
    <property type="match status" value="1"/>
</dbReference>
<dbReference type="FunFam" id="3.40.50.2300:FF:000023">
    <property type="entry name" value="Transcriptional regulatory protein RcsB"/>
    <property type="match status" value="1"/>
</dbReference>
<dbReference type="Gene3D" id="3.40.50.2300">
    <property type="match status" value="1"/>
</dbReference>
<dbReference type="Gene3D" id="1.10.10.10">
    <property type="entry name" value="Winged helix-like DNA-binding domain superfamily/Winged helix DNA-binding domain"/>
    <property type="match status" value="1"/>
</dbReference>
<dbReference type="HAMAP" id="MF_00981">
    <property type="entry name" value="RcsB"/>
    <property type="match status" value="1"/>
</dbReference>
<dbReference type="InterPro" id="IPR011006">
    <property type="entry name" value="CheY-like_superfamily"/>
</dbReference>
<dbReference type="InterPro" id="IPR030864">
    <property type="entry name" value="RcsB"/>
</dbReference>
<dbReference type="InterPro" id="IPR016032">
    <property type="entry name" value="Sig_transdc_resp-reg_C-effctor"/>
</dbReference>
<dbReference type="InterPro" id="IPR001789">
    <property type="entry name" value="Sig_transdc_resp-reg_receiver"/>
</dbReference>
<dbReference type="InterPro" id="IPR000792">
    <property type="entry name" value="Tscrpt_reg_LuxR_C"/>
</dbReference>
<dbReference type="InterPro" id="IPR039420">
    <property type="entry name" value="WalR-like"/>
</dbReference>
<dbReference type="InterPro" id="IPR036388">
    <property type="entry name" value="WH-like_DNA-bd_sf"/>
</dbReference>
<dbReference type="NCBIfam" id="NF008098">
    <property type="entry name" value="PRK10840.1"/>
    <property type="match status" value="1"/>
</dbReference>
<dbReference type="PANTHER" id="PTHR43214:SF17">
    <property type="entry name" value="TRANSCRIPTIONAL REGULATORY PROTEIN RCSB"/>
    <property type="match status" value="1"/>
</dbReference>
<dbReference type="PANTHER" id="PTHR43214">
    <property type="entry name" value="TWO-COMPONENT RESPONSE REGULATOR"/>
    <property type="match status" value="1"/>
</dbReference>
<dbReference type="Pfam" id="PF00196">
    <property type="entry name" value="GerE"/>
    <property type="match status" value="1"/>
</dbReference>
<dbReference type="Pfam" id="PF00072">
    <property type="entry name" value="Response_reg"/>
    <property type="match status" value="1"/>
</dbReference>
<dbReference type="PRINTS" id="PR00038">
    <property type="entry name" value="HTHLUXR"/>
</dbReference>
<dbReference type="SMART" id="SM00421">
    <property type="entry name" value="HTH_LUXR"/>
    <property type="match status" value="1"/>
</dbReference>
<dbReference type="SMART" id="SM00448">
    <property type="entry name" value="REC"/>
    <property type="match status" value="1"/>
</dbReference>
<dbReference type="SUPFAM" id="SSF46894">
    <property type="entry name" value="C-terminal effector domain of the bipartite response regulators"/>
    <property type="match status" value="1"/>
</dbReference>
<dbReference type="SUPFAM" id="SSF52172">
    <property type="entry name" value="CheY-like"/>
    <property type="match status" value="1"/>
</dbReference>
<dbReference type="PROSITE" id="PS00622">
    <property type="entry name" value="HTH_LUXR_1"/>
    <property type="match status" value="1"/>
</dbReference>
<dbReference type="PROSITE" id="PS50043">
    <property type="entry name" value="HTH_LUXR_2"/>
    <property type="match status" value="1"/>
</dbReference>
<dbReference type="PROSITE" id="PS50110">
    <property type="entry name" value="RESPONSE_REGULATORY"/>
    <property type="match status" value="1"/>
</dbReference>
<organism>
    <name type="scientific">Salmonella typhimurium (strain LT2 / SGSC1412 / ATCC 700720)</name>
    <dbReference type="NCBI Taxonomy" id="99287"/>
    <lineage>
        <taxon>Bacteria</taxon>
        <taxon>Pseudomonadati</taxon>
        <taxon>Pseudomonadota</taxon>
        <taxon>Gammaproteobacteria</taxon>
        <taxon>Enterobacterales</taxon>
        <taxon>Enterobacteriaceae</taxon>
        <taxon>Salmonella</taxon>
    </lineage>
</organism>
<proteinExistence type="evidence at protein level"/>
<name>RCSB_SALTY</name>
<evidence type="ECO:0000255" key="1">
    <source>
        <dbReference type="HAMAP-Rule" id="MF_00981"/>
    </source>
</evidence>
<evidence type="ECO:0000255" key="2">
    <source>
        <dbReference type="PROSITE-ProRule" id="PRU00169"/>
    </source>
</evidence>
<evidence type="ECO:0007829" key="3">
    <source>
        <dbReference type="PDB" id="5O8Y"/>
    </source>
</evidence>
<evidence type="ECO:0007829" key="4">
    <source>
        <dbReference type="PDB" id="5O8Z"/>
    </source>
</evidence>
<evidence type="ECO:0007829" key="5">
    <source>
        <dbReference type="PDB" id="6EO3"/>
    </source>
</evidence>
<evidence type="ECO:0007829" key="6">
    <source>
        <dbReference type="PDB" id="6ZIX"/>
    </source>
</evidence>
<protein>
    <recommendedName>
        <fullName evidence="1">Transcriptional regulatory protein RcsB</fullName>
    </recommendedName>
</protein>
<accession>P58663</accession>
<reference key="1">
    <citation type="journal article" date="2001" name="Nature">
        <title>Complete genome sequence of Salmonella enterica serovar Typhimurium LT2.</title>
        <authorList>
            <person name="McClelland M."/>
            <person name="Sanderson K.E."/>
            <person name="Spieth J."/>
            <person name="Clifton S.W."/>
            <person name="Latreille P."/>
            <person name="Courtney L."/>
            <person name="Porwollik S."/>
            <person name="Ali J."/>
            <person name="Dante M."/>
            <person name="Du F."/>
            <person name="Hou S."/>
            <person name="Layman D."/>
            <person name="Leonard S."/>
            <person name="Nguyen C."/>
            <person name="Scott K."/>
            <person name="Holmes A."/>
            <person name="Grewal N."/>
            <person name="Mulvaney E."/>
            <person name="Ryan E."/>
            <person name="Sun H."/>
            <person name="Florea L."/>
            <person name="Miller W."/>
            <person name="Stoneking T."/>
            <person name="Nhan M."/>
            <person name="Waterston R."/>
            <person name="Wilson R.K."/>
        </authorList>
    </citation>
    <scope>NUCLEOTIDE SEQUENCE [LARGE SCALE GENOMIC DNA]</scope>
    <source>
        <strain>LT2 / SGSC1412 / ATCC 700720</strain>
    </source>
</reference>
<sequence length="216" mass="23715">MNNMNVIIADDHPIVLFGIRKSLEQIEWVNVVGEFEDSTALINNLPKLDAHVLITDLSMPGDKYGDGITLIKYIKRHFPSLSIIVLTMNNNPAILSAVLDLDIEGIVLKQGAPTDLPKALAALQKGKKFTPESVSRLLEKISAGGYGDKRLSPKESEVLRLFAEGFLVTEIAKKLNRSIKTISSQKKSAMMKLGVENDIALLNYLSSVTLSPTDKE</sequence>
<comment type="function">
    <text evidence="1">Component of the Rcs signaling system, which controls transcription of numerous genes. RcsB is the response regulator that binds to regulatory DNA regions. Can function both in an RcsA-dependent or RcsA-independent manner.</text>
</comment>
<comment type="subunit">
    <text evidence="1">Interacts with RcsD and RcsA.</text>
</comment>
<comment type="PTM">
    <text evidence="1">Phosphorylated and activated by RcsD.</text>
</comment>
<comment type="similarity">
    <text evidence="1">Belongs to the RcsB family.</text>
</comment>
<feature type="chain" id="PRO_0000081213" description="Transcriptional regulatory protein RcsB">
    <location>
        <begin position="1"/>
        <end position="216"/>
    </location>
</feature>
<feature type="domain" description="Response regulatory" evidence="2">
    <location>
        <begin position="5"/>
        <end position="124"/>
    </location>
</feature>
<feature type="domain" description="HTH luxR-type" evidence="1">
    <location>
        <begin position="144"/>
        <end position="209"/>
    </location>
</feature>
<feature type="DNA-binding region" description="H-T-H motif" evidence="1">
    <location>
        <begin position="168"/>
        <end position="187"/>
    </location>
</feature>
<feature type="modified residue" description="4-aspartylphosphate" evidence="1">
    <location>
        <position position="56"/>
    </location>
</feature>
<feature type="strand" evidence="4">
    <location>
        <begin position="4"/>
        <end position="9"/>
    </location>
</feature>
<feature type="helix" evidence="4">
    <location>
        <begin position="13"/>
        <end position="24"/>
    </location>
</feature>
<feature type="strand" evidence="6">
    <location>
        <begin position="26"/>
        <end position="28"/>
    </location>
</feature>
<feature type="strand" evidence="4">
    <location>
        <begin position="29"/>
        <end position="37"/>
    </location>
</feature>
<feature type="helix" evidence="4">
    <location>
        <begin position="38"/>
        <end position="44"/>
    </location>
</feature>
<feature type="helix" evidence="4">
    <location>
        <begin position="45"/>
        <end position="47"/>
    </location>
</feature>
<feature type="strand" evidence="4">
    <location>
        <begin position="51"/>
        <end position="55"/>
    </location>
</feature>
<feature type="turn" evidence="4">
    <location>
        <begin position="62"/>
        <end position="64"/>
    </location>
</feature>
<feature type="helix" evidence="4">
    <location>
        <begin position="67"/>
        <end position="77"/>
    </location>
</feature>
<feature type="strand" evidence="4">
    <location>
        <begin position="82"/>
        <end position="87"/>
    </location>
</feature>
<feature type="helix" evidence="4">
    <location>
        <begin position="92"/>
        <end position="100"/>
    </location>
</feature>
<feature type="strand" evidence="4">
    <location>
        <begin position="104"/>
        <end position="108"/>
    </location>
</feature>
<feature type="helix" evidence="5">
    <location>
        <begin position="109"/>
        <end position="111"/>
    </location>
</feature>
<feature type="helix" evidence="4">
    <location>
        <begin position="115"/>
        <end position="125"/>
    </location>
</feature>
<feature type="helix" evidence="4">
    <location>
        <begin position="132"/>
        <end position="142"/>
    </location>
</feature>
<feature type="turn" evidence="3">
    <location>
        <begin position="144"/>
        <end position="146"/>
    </location>
</feature>
<feature type="strand" evidence="3">
    <location>
        <begin position="147"/>
        <end position="149"/>
    </location>
</feature>
<feature type="helix" evidence="4">
    <location>
        <begin position="153"/>
        <end position="164"/>
    </location>
</feature>
<feature type="helix" evidence="4">
    <location>
        <begin position="168"/>
        <end position="173"/>
    </location>
</feature>
<feature type="helix" evidence="4">
    <location>
        <begin position="179"/>
        <end position="193"/>
    </location>
</feature>
<feature type="helix" evidence="4">
    <location>
        <begin position="198"/>
        <end position="208"/>
    </location>
</feature>
<keyword id="KW-0002">3D-structure</keyword>
<keyword id="KW-0238">DNA-binding</keyword>
<keyword id="KW-0597">Phosphoprotein</keyword>
<keyword id="KW-1185">Reference proteome</keyword>
<keyword id="KW-0804">Transcription</keyword>
<keyword id="KW-0805">Transcription regulation</keyword>
<keyword id="KW-0902">Two-component regulatory system</keyword>